<evidence type="ECO:0000250" key="1"/>
<evidence type="ECO:0000269" key="2">
    <source>
    </source>
</evidence>
<evidence type="ECO:0000269" key="3">
    <source>
    </source>
</evidence>
<evidence type="ECO:0000305" key="4"/>
<evidence type="ECO:0007744" key="5">
    <source>
        <dbReference type="PDB" id="4F0T"/>
    </source>
</evidence>
<evidence type="ECO:0007829" key="6">
    <source>
        <dbReference type="PDB" id="4F0T"/>
    </source>
</evidence>
<reference key="1">
    <citation type="online journal article" date="1995" name="Plant Gene Register">
        <title>Cloning and sequence analysis of the genes encoding CpcB and CpcA from Synechocystis sp. PCC 6803.</title>
        <authorList>
            <person name="Plank T."/>
            <person name="Anderson L.K."/>
        </authorList>
        <locator>PGR95-087</locator>
    </citation>
    <scope>NUCLEOTIDE SEQUENCE [GENOMIC DNA]</scope>
</reference>
<reference key="2">
    <citation type="journal article" date="1996" name="DNA Res.">
        <title>Sequence analysis of the genome of the unicellular cyanobacterium Synechocystis sp. strain PCC6803. II. Sequence determination of the entire genome and assignment of potential protein-coding regions.</title>
        <authorList>
            <person name="Kaneko T."/>
            <person name="Sato S."/>
            <person name="Kotani H."/>
            <person name="Tanaka A."/>
            <person name="Asamizu E."/>
            <person name="Nakamura Y."/>
            <person name="Miyajima N."/>
            <person name="Hirosawa M."/>
            <person name="Sugiura M."/>
            <person name="Sasamoto S."/>
            <person name="Kimura T."/>
            <person name="Hosouchi T."/>
            <person name="Matsuno A."/>
            <person name="Muraki A."/>
            <person name="Nakazaki N."/>
            <person name="Naruo K."/>
            <person name="Okumura S."/>
            <person name="Shimpo S."/>
            <person name="Takeuchi C."/>
            <person name="Wada T."/>
            <person name="Watanabe A."/>
            <person name="Yamada M."/>
            <person name="Yasuda M."/>
            <person name="Tabata S."/>
        </authorList>
    </citation>
    <scope>NUCLEOTIDE SEQUENCE [LARGE SCALE GENOMIC DNA]</scope>
    <source>
        <strain>ATCC 27184 / PCC 6803 / Kazusa</strain>
    </source>
</reference>
<reference key="3">
    <citation type="journal article" date="1997" name="Electrophoresis">
        <title>Towards a proteome project of cyanobacterium Synechocystis sp. strain PCC6803: linking 130 protein spots with their respective genes.</title>
        <authorList>
            <person name="Sazuka T."/>
            <person name="Ohara O."/>
        </authorList>
    </citation>
    <scope>PROTEIN SEQUENCE OF 1-19</scope>
</reference>
<reference key="4">
    <citation type="journal article" date="2019" name="MBio">
        <title>Phycobilisomes Harbor FNRL in Cyanobacteria.</title>
        <authorList>
            <person name="Liu H."/>
            <person name="Weisz D.A."/>
            <person name="Zhang M.M."/>
            <person name="Cheng M."/>
            <person name="Zhang B."/>
            <person name="Zhang H."/>
            <person name="Gerstenecker G.S."/>
            <person name="Pakrasi H.B."/>
            <person name="Gross M.L."/>
            <person name="Blankenship R.E."/>
        </authorList>
    </citation>
    <scope>SUBUNIT</scope>
    <source>
        <strain>ATCC 27184 / PCC 6803 / Kazusa</strain>
    </source>
</reference>
<reference evidence="5" key="5">
    <citation type="journal article" date="2013" name="Biochim. Biophys. Acta">
        <title>Allophycocyanin and phycocyanin crystal structures reveal facets of phycobilisome assembly.</title>
        <authorList>
            <person name="Marx A."/>
            <person name="Adir N."/>
        </authorList>
    </citation>
    <scope>X-RAY CRYSTALLOGRAPHY (2.25 ANGSTROMS) IN COMPLEX WITH PHYCOCYANOBILIN CHROMOPHORE</scope>
    <scope>SUBUNIT</scope>
    <source>
        <strain>ATCC 27184 / PCC 6803 / Kazusa</strain>
    </source>
</reference>
<sequence length="162" mass="17587">MKTPLTEAVSTADSQGRFLSSTELQIAFGRLRQANAGLQAAKALTDNAQSLVNGAAQAVYNKFPYTTQTQGNNFAADQRGKDKCARDIGYYLRIVTYCLVAGGTGPLDEYLIAGIDEINRTFDLSPSWYVEALKYIKANHGLSGDARDEANSYLDYAINALS</sequence>
<gene>
    <name type="primary">cpcA</name>
    <name type="ordered locus">sll1578</name>
</gene>
<accession>Q54715</accession>
<organism>
    <name type="scientific">Synechocystis sp. (strain ATCC 27184 / PCC 6803 / Kazusa)</name>
    <dbReference type="NCBI Taxonomy" id="1111708"/>
    <lineage>
        <taxon>Bacteria</taxon>
        <taxon>Bacillati</taxon>
        <taxon>Cyanobacteriota</taxon>
        <taxon>Cyanophyceae</taxon>
        <taxon>Synechococcales</taxon>
        <taxon>Merismopediaceae</taxon>
        <taxon>Synechocystis</taxon>
    </lineage>
</organism>
<proteinExistence type="evidence at protein level"/>
<protein>
    <recommendedName>
        <fullName>C-phycocyanin alpha subunit</fullName>
    </recommendedName>
</protein>
<name>PHCA_SYNY3</name>
<comment type="function">
    <text>Light-harvesting photosynthetic bile pigment-protein from the phycobiliprotein complex (phycobilisome, PBS). Phycocyanin is the major phycobiliprotein in the PBS rod.</text>
</comment>
<comment type="subunit">
    <text evidence="2 3">Heterodimer of an alpha and a beta chain, which further assembles into trimers. The trimers assemble into hexamers, although these were not seen in the crystallographic studies (PubMed:23201474). Part of 2 PBS rod complexes, the conventional CpcG-PBS rod and a photosystem I-specific CpcL-PBS rod, both of which include ferredoxin--NADP reductase (petH) (PubMed:31015331).</text>
</comment>
<comment type="subcellular location">
    <subcellularLocation>
        <location evidence="1">Cellular thylakoid membrane</location>
        <topology evidence="1">Peripheral membrane protein</topology>
        <orientation evidence="1">Cytoplasmic side</orientation>
    </subcellularLocation>
    <text evidence="1 3">Part of the phycobilisome rod.</text>
</comment>
<comment type="PTM">
    <text evidence="2">Contains one covalently linked phycocyanobilin chromophore.</text>
</comment>
<comment type="similarity">
    <text evidence="4">Belongs to the phycobiliprotein family.</text>
</comment>
<keyword id="KW-0002">3D-structure</keyword>
<keyword id="KW-0042">Antenna complex</keyword>
<keyword id="KW-0089">Bile pigment</keyword>
<keyword id="KW-0157">Chromophore</keyword>
<keyword id="KW-0903">Direct protein sequencing</keyword>
<keyword id="KW-0249">Electron transport</keyword>
<keyword id="KW-0472">Membrane</keyword>
<keyword id="KW-0602">Photosynthesis</keyword>
<keyword id="KW-0605">Phycobilisome</keyword>
<keyword id="KW-1185">Reference proteome</keyword>
<keyword id="KW-0793">Thylakoid</keyword>
<keyword id="KW-0813">Transport</keyword>
<dbReference type="EMBL" id="U34930">
    <property type="protein sequence ID" value="AAA91033.1"/>
    <property type="molecule type" value="Genomic_DNA"/>
</dbReference>
<dbReference type="EMBL" id="BA000022">
    <property type="protein sequence ID" value="BAA17231.1"/>
    <property type="molecule type" value="Genomic_DNA"/>
</dbReference>
<dbReference type="PIR" id="S75317">
    <property type="entry name" value="S75317"/>
</dbReference>
<dbReference type="PDB" id="4F0T">
    <property type="method" value="X-ray"/>
    <property type="resolution" value="2.25 A"/>
    <property type="chains" value="A=1-162"/>
</dbReference>
<dbReference type="PDB" id="7SC8">
    <property type="method" value="EM"/>
    <property type="resolution" value="2.10 A"/>
    <property type="chains" value="AA/AC/AE/AG/AI/AK/AM/AO/AQ/AS/AU/AW/AY/BA/BC/BE/BG/BI=1-162"/>
</dbReference>
<dbReference type="PDB" id="7SCA">
    <property type="method" value="EM"/>
    <property type="resolution" value="2.10 A"/>
    <property type="chains" value="AA/AC/AE/AG/AI/AK/AM/AO/AQ/AS/AU/AW/AY/BA/BC/BE/BG/BI=1-162"/>
</dbReference>
<dbReference type="PDB" id="8HFQ">
    <property type="method" value="EM"/>
    <property type="resolution" value="2.64 A"/>
    <property type="chains" value="A/C/E/G/I/K/M/O/Q/S/U/W/Y/a/c/e/g/i=1-162"/>
</dbReference>
<dbReference type="PDB" id="8TO5">
    <property type="method" value="EM"/>
    <property type="resolution" value="1.87 A"/>
    <property type="chains" value="M/O/Q/S/U/W=1-162"/>
</dbReference>
<dbReference type="PDB" id="8TRO">
    <property type="method" value="EM"/>
    <property type="resolution" value="1.90 A"/>
    <property type="chains" value="0/2/4/6/8/A/C/E/G/I/K/M/O/Q/S/U/W/Y=1-162"/>
</dbReference>
<dbReference type="PDBsum" id="4F0T"/>
<dbReference type="PDBsum" id="7SC8"/>
<dbReference type="PDBsum" id="7SCA"/>
<dbReference type="PDBsum" id="8HFQ"/>
<dbReference type="PDBsum" id="8TO5"/>
<dbReference type="PDBsum" id="8TRO"/>
<dbReference type="EMDB" id="EMD-25029"/>
<dbReference type="EMDB" id="EMD-25031"/>
<dbReference type="EMDB" id="EMD-34724"/>
<dbReference type="EMDB" id="EMD-41435"/>
<dbReference type="EMDB" id="EMD-41585"/>
<dbReference type="SMR" id="Q54715"/>
<dbReference type="IntAct" id="Q54715">
    <property type="interactions" value="7"/>
</dbReference>
<dbReference type="STRING" id="1148.gene:10498094"/>
<dbReference type="PaxDb" id="1148-1652308"/>
<dbReference type="EnsemblBacteria" id="BAA17231">
    <property type="protein sequence ID" value="BAA17231"/>
    <property type="gene ID" value="BAA17231"/>
</dbReference>
<dbReference type="KEGG" id="syn:sll1578"/>
<dbReference type="eggNOG" id="ENOG502Z85C">
    <property type="taxonomic scope" value="Bacteria"/>
</dbReference>
<dbReference type="InParanoid" id="Q54715"/>
<dbReference type="PhylomeDB" id="Q54715"/>
<dbReference type="EvolutionaryTrace" id="Q54715"/>
<dbReference type="Proteomes" id="UP000001425">
    <property type="component" value="Chromosome"/>
</dbReference>
<dbReference type="GO" id="GO:0030089">
    <property type="term" value="C:phycobilisome"/>
    <property type="evidence" value="ECO:0000314"/>
    <property type="project" value="UniProtKB"/>
</dbReference>
<dbReference type="GO" id="GO:0031676">
    <property type="term" value="C:plasma membrane-derived thylakoid membrane"/>
    <property type="evidence" value="ECO:0007669"/>
    <property type="project" value="UniProtKB-SubCell"/>
</dbReference>
<dbReference type="GO" id="GO:0015979">
    <property type="term" value="P:photosynthesis"/>
    <property type="evidence" value="ECO:0007669"/>
    <property type="project" value="UniProtKB-KW"/>
</dbReference>
<dbReference type="CDD" id="cd14770">
    <property type="entry name" value="PC-PEC_alpha"/>
    <property type="match status" value="1"/>
</dbReference>
<dbReference type="Gene3D" id="1.10.490.20">
    <property type="entry name" value="Phycocyanins"/>
    <property type="match status" value="1"/>
</dbReference>
<dbReference type="InterPro" id="IPR009050">
    <property type="entry name" value="Globin-like_sf"/>
</dbReference>
<dbReference type="InterPro" id="IPR012128">
    <property type="entry name" value="Phycobilisome_asu/bsu"/>
</dbReference>
<dbReference type="InterPro" id="IPR038719">
    <property type="entry name" value="Phycobilisome_asu/bsu_sf"/>
</dbReference>
<dbReference type="InterPro" id="IPR006246">
    <property type="entry name" value="Phycocyanin_a"/>
</dbReference>
<dbReference type="NCBIfam" id="TIGR01338">
    <property type="entry name" value="phycocy_alpha"/>
    <property type="match status" value="1"/>
</dbReference>
<dbReference type="PANTHER" id="PTHR34011:SF4">
    <property type="entry name" value="C-PHYCOCYANIN ALPHA SUBUNIT"/>
    <property type="match status" value="1"/>
</dbReference>
<dbReference type="PANTHER" id="PTHR34011">
    <property type="entry name" value="PHYCOBILISOME 32.1 KDA LINKER POLYPEPTIDE, PHYCOCYANIN-ASSOCIATED, ROD 2-RELATED"/>
    <property type="match status" value="1"/>
</dbReference>
<dbReference type="Pfam" id="PF00502">
    <property type="entry name" value="Phycobilisome"/>
    <property type="match status" value="1"/>
</dbReference>
<dbReference type="PIRSF" id="PIRSF000081">
    <property type="entry name" value="Phycocyanin"/>
    <property type="match status" value="1"/>
</dbReference>
<dbReference type="SUPFAM" id="SSF46458">
    <property type="entry name" value="Globin-like"/>
    <property type="match status" value="1"/>
</dbReference>
<feature type="chain" id="PRO_0000199133" description="C-phycocyanin alpha subunit">
    <location>
        <begin position="1"/>
        <end position="162"/>
    </location>
</feature>
<feature type="binding site" description="covalent" evidence="2 5">
    <location>
        <position position="84"/>
    </location>
    <ligand>
        <name>(2R,3E)-phycocyanobilin</name>
        <dbReference type="ChEBI" id="CHEBI:85275"/>
    </ligand>
</feature>
<feature type="helix" evidence="6">
    <location>
        <begin position="4"/>
        <end position="14"/>
    </location>
</feature>
<feature type="helix" evidence="6">
    <location>
        <begin position="21"/>
        <end position="46"/>
    </location>
</feature>
<feature type="helix" evidence="6">
    <location>
        <begin position="48"/>
        <end position="62"/>
    </location>
</feature>
<feature type="helix" evidence="6">
    <location>
        <begin position="64"/>
        <end position="67"/>
    </location>
</feature>
<feature type="helix" evidence="6">
    <location>
        <begin position="78"/>
        <end position="101"/>
    </location>
</feature>
<feature type="helix" evidence="6">
    <location>
        <begin position="105"/>
        <end position="110"/>
    </location>
</feature>
<feature type="turn" evidence="6">
    <location>
        <begin position="111"/>
        <end position="114"/>
    </location>
</feature>
<feature type="helix" evidence="6">
    <location>
        <begin position="115"/>
        <end position="121"/>
    </location>
</feature>
<feature type="helix" evidence="6">
    <location>
        <begin position="126"/>
        <end position="137"/>
    </location>
</feature>
<feature type="helix" evidence="6">
    <location>
        <begin position="144"/>
        <end position="161"/>
    </location>
</feature>